<name>EFGM_DROSE</name>
<keyword id="KW-0251">Elongation factor</keyword>
<keyword id="KW-0342">GTP-binding</keyword>
<keyword id="KW-0496">Mitochondrion</keyword>
<keyword id="KW-0547">Nucleotide-binding</keyword>
<keyword id="KW-0648">Protein biosynthesis</keyword>
<keyword id="KW-1185">Reference proteome</keyword>
<organism>
    <name type="scientific">Drosophila sechellia</name>
    <name type="common">Fruit fly</name>
    <dbReference type="NCBI Taxonomy" id="7238"/>
    <lineage>
        <taxon>Eukaryota</taxon>
        <taxon>Metazoa</taxon>
        <taxon>Ecdysozoa</taxon>
        <taxon>Arthropoda</taxon>
        <taxon>Hexapoda</taxon>
        <taxon>Insecta</taxon>
        <taxon>Pterygota</taxon>
        <taxon>Neoptera</taxon>
        <taxon>Endopterygota</taxon>
        <taxon>Diptera</taxon>
        <taxon>Brachycera</taxon>
        <taxon>Muscomorpha</taxon>
        <taxon>Ephydroidea</taxon>
        <taxon>Drosophilidae</taxon>
        <taxon>Drosophila</taxon>
        <taxon>Sophophora</taxon>
    </lineage>
</organism>
<reference key="1">
    <citation type="journal article" date="2007" name="Nature">
        <title>Evolution of genes and genomes on the Drosophila phylogeny.</title>
        <authorList>
            <consortium name="Drosophila 12 genomes consortium"/>
        </authorList>
    </citation>
    <scope>NUCLEOTIDE SEQUENCE [LARGE SCALE GENOMIC DNA]</scope>
    <source>
        <strain>Rob3c / Tucson 14021-0248.25</strain>
    </source>
</reference>
<comment type="function">
    <text evidence="2">Mitochondrial GTPase that catalyzes the GTP-dependent ribosomal translocation step during translation elongation. During this step, the ribosome changes from the pre-translocational (PRE) to the post-translocational (POST) state as the newly formed A-site-bound peptidyl-tRNA and P-site-bound deacylated tRNA move to the P and E sites, respectively. Catalyzes the coordinated movement of the two tRNA molecules, the mRNA and conformational changes in the ribosome. Essential during development as it acts as a retrograde signal from mitochondria to the nucleus to slow down cell proliferation if mitochondrial energy output is low (By similarity).</text>
</comment>
<comment type="pathway">
    <text evidence="2">Protein biosynthesis; polypeptide chain elongation.</text>
</comment>
<comment type="subcellular location">
    <subcellularLocation>
        <location evidence="2">Mitochondrion</location>
    </subcellularLocation>
</comment>
<comment type="miscellaneous">
    <text evidence="2">This protein may be expected to contain an N-terminal transit peptide but none has been predicted.</text>
</comment>
<comment type="similarity">
    <text evidence="3">Belongs to the TRAFAC class translation factor GTPase superfamily. Classic translation factor GTPase family. EF-G/EF-2 subfamily.</text>
</comment>
<sequence length="745" mass="83510">MSLITRLLTGNNTLRLRALESLGKAGYSSHAKFSEHKPIERIRNIGISAHIDSGKTTLTERILFYTGRIAEMHEVRGKDNVGATMDSMELERQRGITIQSAATYTLWKDTNINIIDTPGHVDFTVEVERALRVLDGAVLVLCAVGGVQSQTLTVNRQMKRYNVPCLAFINKLDRLGSNPYRVLSQMRSKMNHNAAFIQLPIGVESNCKGIVDLVREKAIYFEGEHGMDIRLDEIPQDMRVESLERRQELIEHLSNADETLGELFLEEKPFTEDDIKAALRRTCINRTFTPVLVGTALKNKGVQPLLDAVLDYLPNPGEVENLGFIEKEGQDPEKVVLNPARDGKDPFVGLAFKLEAGRFGQLTYLRCYQGVLRKGDNIFNARTNKKVRIARLVRLHSNQMEDVNEVYAGDIFALFGVDCASGDTFTTNPKNNLSMESIFVPEPVVSMAIKPNNTKDRDNFSKAIARFTKEDPTFHFFFDNDVKETLVSGMGELHLEIYAQRMEREYGCPVTLGKPKVAFRETLVGPCEFDYLHKKQSGGSGQYARIIGVMEPLPPNQNTLLEFVDETVGTNVPKQFVPGVEKGYREMAEKGMLSGHKLSGIRFRLQDGGHHIVDSSELAFMLAAHGAIKEVFQNGSWQILEPIMLVEVTAPEEFQGAVMGHLSKRHGIITGTEGTEGWFTVYAEVPLNDMFGYAGELRSSTQGKGEFTMEYSRYSPCLPDVQDQIVRQYQESQGLAQPDKKKKKN</sequence>
<protein>
    <recommendedName>
        <fullName evidence="2">Elongation factor G, mitochondrial</fullName>
        <shortName evidence="2">EF-Gmt</shortName>
    </recommendedName>
    <alternativeName>
        <fullName evidence="2">Elongation factor G 1, mitochondrial</fullName>
        <shortName evidence="2">mEF-G 1</shortName>
    </alternativeName>
    <alternativeName>
        <fullName evidence="2">Elongation factor G1</fullName>
    </alternativeName>
</protein>
<proteinExistence type="inferred from homology"/>
<evidence type="ECO:0000250" key="1">
    <source>
        <dbReference type="UniProtKB" id="Q9VM33"/>
    </source>
</evidence>
<evidence type="ECO:0000255" key="2">
    <source>
        <dbReference type="HAMAP-Rule" id="MF_03061"/>
    </source>
</evidence>
<evidence type="ECO:0000305" key="3"/>
<gene>
    <name evidence="1" type="primary">mEFG1</name>
    <name evidence="1" type="synonym">ico</name>
    <name type="ORF">GM13604</name>
</gene>
<dbReference type="EMBL" id="CH480818">
    <property type="protein sequence ID" value="EDW51971.1"/>
    <property type="molecule type" value="Genomic_DNA"/>
</dbReference>
<dbReference type="SMR" id="B4HY41"/>
<dbReference type="STRING" id="7238.B4HY41"/>
<dbReference type="EnsemblMetazoa" id="FBtr0196589">
    <property type="protein sequence ID" value="FBpp0195081"/>
    <property type="gene ID" value="FBgn0168535"/>
</dbReference>
<dbReference type="EnsemblMetazoa" id="XM_002036012.2">
    <property type="protein sequence ID" value="XP_002036048.1"/>
    <property type="gene ID" value="LOC6611507"/>
</dbReference>
<dbReference type="GeneID" id="6611507"/>
<dbReference type="KEGG" id="dse:6611507"/>
<dbReference type="CTD" id="34004"/>
<dbReference type="HOGENOM" id="CLU_002794_4_0_1"/>
<dbReference type="OMA" id="GQFAKVQ"/>
<dbReference type="OrthoDB" id="15660at7215"/>
<dbReference type="PhylomeDB" id="B4HY41"/>
<dbReference type="UniPathway" id="UPA00345"/>
<dbReference type="Proteomes" id="UP000001292">
    <property type="component" value="Unassembled WGS sequence"/>
</dbReference>
<dbReference type="GO" id="GO:0005739">
    <property type="term" value="C:mitochondrion"/>
    <property type="evidence" value="ECO:0007669"/>
    <property type="project" value="UniProtKB-SubCell"/>
</dbReference>
<dbReference type="GO" id="GO:0005634">
    <property type="term" value="C:nucleus"/>
    <property type="evidence" value="ECO:0007669"/>
    <property type="project" value="EnsemblMetazoa"/>
</dbReference>
<dbReference type="GO" id="GO:0005525">
    <property type="term" value="F:GTP binding"/>
    <property type="evidence" value="ECO:0007669"/>
    <property type="project" value="UniProtKB-UniRule"/>
</dbReference>
<dbReference type="GO" id="GO:0003924">
    <property type="term" value="F:GTPase activity"/>
    <property type="evidence" value="ECO:0000250"/>
    <property type="project" value="UniProtKB"/>
</dbReference>
<dbReference type="GO" id="GO:0003746">
    <property type="term" value="F:translation elongation factor activity"/>
    <property type="evidence" value="ECO:0000250"/>
    <property type="project" value="UniProtKB"/>
</dbReference>
<dbReference type="GO" id="GO:0070125">
    <property type="term" value="P:mitochondrial translational elongation"/>
    <property type="evidence" value="ECO:0000250"/>
    <property type="project" value="UniProtKB"/>
</dbReference>
<dbReference type="CDD" id="cd01886">
    <property type="entry name" value="EF-G"/>
    <property type="match status" value="1"/>
</dbReference>
<dbReference type="CDD" id="cd16262">
    <property type="entry name" value="EFG_III"/>
    <property type="match status" value="1"/>
</dbReference>
<dbReference type="CDD" id="cd01434">
    <property type="entry name" value="EFG_mtEFG1_IV"/>
    <property type="match status" value="1"/>
</dbReference>
<dbReference type="CDD" id="cd04097">
    <property type="entry name" value="mtEFG1_C"/>
    <property type="match status" value="1"/>
</dbReference>
<dbReference type="CDD" id="cd04091">
    <property type="entry name" value="mtEFG1_II_like"/>
    <property type="match status" value="1"/>
</dbReference>
<dbReference type="FunFam" id="3.30.230.10:FF:000003">
    <property type="entry name" value="Elongation factor G"/>
    <property type="match status" value="1"/>
</dbReference>
<dbReference type="FunFam" id="3.30.70.240:FF:000001">
    <property type="entry name" value="Elongation factor G"/>
    <property type="match status" value="1"/>
</dbReference>
<dbReference type="FunFam" id="3.30.70.870:FF:000001">
    <property type="entry name" value="Elongation factor G"/>
    <property type="match status" value="1"/>
</dbReference>
<dbReference type="FunFam" id="2.40.30.10:FF:000022">
    <property type="entry name" value="Elongation factor G, mitochondrial"/>
    <property type="match status" value="1"/>
</dbReference>
<dbReference type="FunFam" id="3.40.50.300:FF:000539">
    <property type="entry name" value="Elongation factor G, mitochondrial"/>
    <property type="match status" value="1"/>
</dbReference>
<dbReference type="Gene3D" id="3.30.230.10">
    <property type="match status" value="1"/>
</dbReference>
<dbReference type="Gene3D" id="3.30.70.240">
    <property type="match status" value="1"/>
</dbReference>
<dbReference type="Gene3D" id="3.30.70.870">
    <property type="entry name" value="Elongation Factor G (Translational Gtpase), domain 3"/>
    <property type="match status" value="1"/>
</dbReference>
<dbReference type="Gene3D" id="3.40.50.300">
    <property type="entry name" value="P-loop containing nucleotide triphosphate hydrolases"/>
    <property type="match status" value="1"/>
</dbReference>
<dbReference type="Gene3D" id="2.40.30.10">
    <property type="entry name" value="Translation factors"/>
    <property type="match status" value="1"/>
</dbReference>
<dbReference type="HAMAP" id="MF_00054_B">
    <property type="entry name" value="EF_G_EF_2_B"/>
    <property type="match status" value="1"/>
</dbReference>
<dbReference type="InterPro" id="IPR041095">
    <property type="entry name" value="EFG_II"/>
</dbReference>
<dbReference type="InterPro" id="IPR009022">
    <property type="entry name" value="EFG_III"/>
</dbReference>
<dbReference type="InterPro" id="IPR035647">
    <property type="entry name" value="EFG_III/V"/>
</dbReference>
<dbReference type="InterPro" id="IPR047872">
    <property type="entry name" value="EFG_IV"/>
</dbReference>
<dbReference type="InterPro" id="IPR035649">
    <property type="entry name" value="EFG_V"/>
</dbReference>
<dbReference type="InterPro" id="IPR000640">
    <property type="entry name" value="EFG_V-like"/>
</dbReference>
<dbReference type="InterPro" id="IPR004161">
    <property type="entry name" value="EFTu-like_2"/>
</dbReference>
<dbReference type="InterPro" id="IPR031157">
    <property type="entry name" value="G_TR_CS"/>
</dbReference>
<dbReference type="InterPro" id="IPR027417">
    <property type="entry name" value="P-loop_NTPase"/>
</dbReference>
<dbReference type="InterPro" id="IPR020568">
    <property type="entry name" value="Ribosomal_Su5_D2-typ_SF"/>
</dbReference>
<dbReference type="InterPro" id="IPR014721">
    <property type="entry name" value="Ribsml_uS5_D2-typ_fold_subgr"/>
</dbReference>
<dbReference type="InterPro" id="IPR005225">
    <property type="entry name" value="Small_GTP-bd"/>
</dbReference>
<dbReference type="InterPro" id="IPR000795">
    <property type="entry name" value="T_Tr_GTP-bd_dom"/>
</dbReference>
<dbReference type="InterPro" id="IPR009000">
    <property type="entry name" value="Transl_B-barrel_sf"/>
</dbReference>
<dbReference type="InterPro" id="IPR004540">
    <property type="entry name" value="Transl_elong_EFG/EF2"/>
</dbReference>
<dbReference type="InterPro" id="IPR005517">
    <property type="entry name" value="Transl_elong_EFG/EF2_IV"/>
</dbReference>
<dbReference type="NCBIfam" id="TIGR00484">
    <property type="entry name" value="EF-G"/>
    <property type="match status" value="1"/>
</dbReference>
<dbReference type="NCBIfam" id="NF009381">
    <property type="entry name" value="PRK12740.1-5"/>
    <property type="match status" value="1"/>
</dbReference>
<dbReference type="NCBIfam" id="TIGR00231">
    <property type="entry name" value="small_GTP"/>
    <property type="match status" value="1"/>
</dbReference>
<dbReference type="PANTHER" id="PTHR43636">
    <property type="entry name" value="ELONGATION FACTOR G, MITOCHONDRIAL"/>
    <property type="match status" value="1"/>
</dbReference>
<dbReference type="PANTHER" id="PTHR43636:SF2">
    <property type="entry name" value="ELONGATION FACTOR G, MITOCHONDRIAL"/>
    <property type="match status" value="1"/>
</dbReference>
<dbReference type="Pfam" id="PF00679">
    <property type="entry name" value="EFG_C"/>
    <property type="match status" value="1"/>
</dbReference>
<dbReference type="Pfam" id="PF14492">
    <property type="entry name" value="EFG_III"/>
    <property type="match status" value="1"/>
</dbReference>
<dbReference type="Pfam" id="PF03764">
    <property type="entry name" value="EFG_IV"/>
    <property type="match status" value="1"/>
</dbReference>
<dbReference type="Pfam" id="PF00009">
    <property type="entry name" value="GTP_EFTU"/>
    <property type="match status" value="1"/>
</dbReference>
<dbReference type="Pfam" id="PF03144">
    <property type="entry name" value="GTP_EFTU_D2"/>
    <property type="match status" value="1"/>
</dbReference>
<dbReference type="PRINTS" id="PR00315">
    <property type="entry name" value="ELONGATNFCT"/>
</dbReference>
<dbReference type="SMART" id="SM00838">
    <property type="entry name" value="EFG_C"/>
    <property type="match status" value="1"/>
</dbReference>
<dbReference type="SMART" id="SM00889">
    <property type="entry name" value="EFG_IV"/>
    <property type="match status" value="1"/>
</dbReference>
<dbReference type="SUPFAM" id="SSF54980">
    <property type="entry name" value="EF-G C-terminal domain-like"/>
    <property type="match status" value="2"/>
</dbReference>
<dbReference type="SUPFAM" id="SSF52540">
    <property type="entry name" value="P-loop containing nucleoside triphosphate hydrolases"/>
    <property type="match status" value="1"/>
</dbReference>
<dbReference type="SUPFAM" id="SSF54211">
    <property type="entry name" value="Ribosomal protein S5 domain 2-like"/>
    <property type="match status" value="1"/>
</dbReference>
<dbReference type="SUPFAM" id="SSF50447">
    <property type="entry name" value="Translation proteins"/>
    <property type="match status" value="1"/>
</dbReference>
<dbReference type="PROSITE" id="PS00301">
    <property type="entry name" value="G_TR_1"/>
    <property type="match status" value="1"/>
</dbReference>
<dbReference type="PROSITE" id="PS51722">
    <property type="entry name" value="G_TR_2"/>
    <property type="match status" value="1"/>
</dbReference>
<accession>B4HY41</accession>
<feature type="chain" id="PRO_0000385550" description="Elongation factor G, mitochondrial">
    <location>
        <begin position="1"/>
        <end position="745"/>
    </location>
</feature>
<feature type="domain" description="tr-type G">
    <location>
        <begin position="40"/>
        <end position="317"/>
    </location>
</feature>
<feature type="binding site" evidence="2">
    <location>
        <begin position="49"/>
        <end position="56"/>
    </location>
    <ligand>
        <name>GTP</name>
        <dbReference type="ChEBI" id="CHEBI:37565"/>
    </ligand>
</feature>
<feature type="binding site" evidence="2">
    <location>
        <begin position="116"/>
        <end position="120"/>
    </location>
    <ligand>
        <name>GTP</name>
        <dbReference type="ChEBI" id="CHEBI:37565"/>
    </ligand>
</feature>
<feature type="binding site" evidence="2">
    <location>
        <begin position="170"/>
        <end position="173"/>
    </location>
    <ligand>
        <name>GTP</name>
        <dbReference type="ChEBI" id="CHEBI:37565"/>
    </ligand>
</feature>